<dbReference type="EMBL" id="AE000667">
    <property type="protein sequence ID" value="AAC07955.1"/>
    <property type="molecule type" value="Genomic_DNA"/>
</dbReference>
<dbReference type="RefSeq" id="NP_046403.1">
    <property type="nucleotide sequence ID" value="NC_001880.1"/>
</dbReference>
<dbReference type="RefSeq" id="WP_010890549.1">
    <property type="nucleotide sequence ID" value="NC_001880.1"/>
</dbReference>
<dbReference type="SMR" id="O66403"/>
<dbReference type="EnsemblBacteria" id="AAC07955">
    <property type="protein sequence ID" value="AAC07955"/>
    <property type="gene ID" value="aq_aa09"/>
</dbReference>
<dbReference type="KEGG" id="aae:aq_aa09"/>
<dbReference type="eggNOG" id="COG0582">
    <property type="taxonomic scope" value="Bacteria"/>
</dbReference>
<dbReference type="HOGENOM" id="CLU_930168_0_0_0"/>
<dbReference type="InParanoid" id="O66403"/>
<dbReference type="OrthoDB" id="11480at2"/>
<dbReference type="Proteomes" id="UP000000798">
    <property type="component" value="Plasmid ece1"/>
</dbReference>
<dbReference type="GO" id="GO:0003677">
    <property type="term" value="F:DNA binding"/>
    <property type="evidence" value="ECO:0007669"/>
    <property type="project" value="UniProtKB-KW"/>
</dbReference>
<dbReference type="GO" id="GO:0009009">
    <property type="term" value="F:site-specific recombinase activity"/>
    <property type="evidence" value="ECO:0000318"/>
    <property type="project" value="GO_Central"/>
</dbReference>
<dbReference type="GO" id="GO:0007059">
    <property type="term" value="P:chromosome segregation"/>
    <property type="evidence" value="ECO:0000318"/>
    <property type="project" value="GO_Central"/>
</dbReference>
<dbReference type="GO" id="GO:0006310">
    <property type="term" value="P:DNA recombination"/>
    <property type="evidence" value="ECO:0000318"/>
    <property type="project" value="GO_Central"/>
</dbReference>
<dbReference type="GO" id="GO:0075713">
    <property type="term" value="P:establishment of integrated proviral latency"/>
    <property type="evidence" value="ECO:0007669"/>
    <property type="project" value="UniProtKB-KW"/>
</dbReference>
<dbReference type="GO" id="GO:0046718">
    <property type="term" value="P:symbiont entry into host cell"/>
    <property type="evidence" value="ECO:0007669"/>
    <property type="project" value="UniProtKB-KW"/>
</dbReference>
<dbReference type="GO" id="GO:0044826">
    <property type="term" value="P:viral genome integration into host DNA"/>
    <property type="evidence" value="ECO:0007669"/>
    <property type="project" value="UniProtKB-KW"/>
</dbReference>
<dbReference type="CDD" id="cd00397">
    <property type="entry name" value="DNA_BRE_C"/>
    <property type="match status" value="1"/>
</dbReference>
<dbReference type="Gene3D" id="1.10.150.130">
    <property type="match status" value="1"/>
</dbReference>
<dbReference type="Gene3D" id="1.10.443.10">
    <property type="entry name" value="Intergrase catalytic core"/>
    <property type="match status" value="1"/>
</dbReference>
<dbReference type="InterPro" id="IPR044068">
    <property type="entry name" value="CB"/>
</dbReference>
<dbReference type="InterPro" id="IPR011010">
    <property type="entry name" value="DNA_brk_join_enz"/>
</dbReference>
<dbReference type="InterPro" id="IPR013762">
    <property type="entry name" value="Integrase-like_cat_sf"/>
</dbReference>
<dbReference type="InterPro" id="IPR002104">
    <property type="entry name" value="Integrase_catalytic"/>
</dbReference>
<dbReference type="InterPro" id="IPR010998">
    <property type="entry name" value="Integrase_recombinase_N"/>
</dbReference>
<dbReference type="InterPro" id="IPR050090">
    <property type="entry name" value="Tyrosine_recombinase_XerCD"/>
</dbReference>
<dbReference type="PANTHER" id="PTHR30349:SF86">
    <property type="entry name" value="INTEGRASE_RECOMBINASE AQ_AA09-RELATED"/>
    <property type="match status" value="1"/>
</dbReference>
<dbReference type="PANTHER" id="PTHR30349">
    <property type="entry name" value="PHAGE INTEGRASE-RELATED"/>
    <property type="match status" value="1"/>
</dbReference>
<dbReference type="Pfam" id="PF00589">
    <property type="entry name" value="Phage_integrase"/>
    <property type="match status" value="1"/>
</dbReference>
<dbReference type="SUPFAM" id="SSF56349">
    <property type="entry name" value="DNA breaking-rejoining enzymes"/>
    <property type="match status" value="1"/>
</dbReference>
<dbReference type="PROSITE" id="PS51900">
    <property type="entry name" value="CB"/>
    <property type="match status" value="1"/>
</dbReference>
<dbReference type="PROSITE" id="PS51898">
    <property type="entry name" value="TYR_RECOMBINASE"/>
    <property type="match status" value="1"/>
</dbReference>
<feature type="chain" id="PRO_0000197573" description="Probable integrase/recombinase aq_aa09">
    <location>
        <begin position="1"/>
        <end position="315"/>
    </location>
</feature>
<feature type="domain" description="Core-binding (CB)" evidence="2">
    <location>
        <begin position="1"/>
        <end position="78"/>
    </location>
</feature>
<feature type="domain" description="Tyr recombinase" evidence="1">
    <location>
        <begin position="106"/>
        <end position="313"/>
    </location>
</feature>
<feature type="active site" evidence="1">
    <location>
        <position position="150"/>
    </location>
</feature>
<feature type="active site" evidence="1">
    <location>
        <position position="186"/>
    </location>
</feature>
<feature type="active site" evidence="1">
    <location>
        <position position="263"/>
    </location>
</feature>
<feature type="active site" evidence="1">
    <location>
        <position position="266"/>
    </location>
</feature>
<feature type="active site" evidence="1">
    <location>
        <position position="289"/>
    </location>
</feature>
<feature type="active site" description="O-(3'-phospho-DNA)-tyrosine intermediate" evidence="1">
    <location>
        <position position="299"/>
    </location>
</feature>
<comment type="function">
    <text>May function as an integrase.</text>
</comment>
<comment type="similarity">
    <text evidence="3">Belongs to the 'phage' integrase family.</text>
</comment>
<reference key="1">
    <citation type="journal article" date="1998" name="Nature">
        <title>The complete genome of the hyperthermophilic bacterium Aquifex aeolicus.</title>
        <authorList>
            <person name="Deckert G."/>
            <person name="Warren P.V."/>
            <person name="Gaasterland T."/>
            <person name="Young W.G."/>
            <person name="Lenox A.L."/>
            <person name="Graham D.E."/>
            <person name="Overbeek R."/>
            <person name="Snead M.A."/>
            <person name="Keller M."/>
            <person name="Aujay M."/>
            <person name="Huber R."/>
            <person name="Feldman R.A."/>
            <person name="Short J.M."/>
            <person name="Olsen G.J."/>
            <person name="Swanson R.V."/>
        </authorList>
    </citation>
    <scope>NUCLEOTIDE SEQUENCE [LARGE SCALE GENOMIC DNA]</scope>
    <source>
        <strain>VF5</strain>
    </source>
</reference>
<sequence length="315" mass="38088">MEHFIDTYLYELRKVRDEKTIKKKEYLLKHLQDYSEDLPAFDQSEIFSFYEYLKNKNLKETTIRDILKEVRLFYEWLQEQGLNLKFDEKALKKLFQSKKSQEALKSKKKYYSDDEINLILNAIRGAVEGISTKHPIYYILTIFLLCSGLRISEAVKVRKKDFEVKRILTEEGEEKEVWFVKVREGKFGKERKALIYFFRPEWKRIFEERLKKLKPEDFFFTYAVKYPKSVKVFTLTDKTAKWFYWKLEKELREKGYEIEVNAHRFRNTYITKLATKGFPVNLIADWVGHSKISTTMDVYMEAEREKQLEAILERI</sequence>
<proteinExistence type="inferred from homology"/>
<keyword id="KW-0229">DNA integration</keyword>
<keyword id="KW-0233">DNA recombination</keyword>
<keyword id="KW-0238">DNA-binding</keyword>
<keyword id="KW-0614">Plasmid</keyword>
<keyword id="KW-1185">Reference proteome</keyword>
<keyword id="KW-1179">Viral genome integration</keyword>
<keyword id="KW-1160">Virus entry into host cell</keyword>
<name>YZ09_AQUAE</name>
<geneLocation type="plasmid">
    <name>ece1</name>
</geneLocation>
<protein>
    <recommendedName>
        <fullName>Probable integrase/recombinase aq_aa09</fullName>
    </recommendedName>
</protein>
<evidence type="ECO:0000255" key="1">
    <source>
        <dbReference type="PROSITE-ProRule" id="PRU01246"/>
    </source>
</evidence>
<evidence type="ECO:0000255" key="2">
    <source>
        <dbReference type="PROSITE-ProRule" id="PRU01248"/>
    </source>
</evidence>
<evidence type="ECO:0000305" key="3"/>
<gene>
    <name type="ordered locus">aq_aa09</name>
</gene>
<accession>O66403</accession>
<organism>
    <name type="scientific">Aquifex aeolicus (strain VF5)</name>
    <dbReference type="NCBI Taxonomy" id="224324"/>
    <lineage>
        <taxon>Bacteria</taxon>
        <taxon>Pseudomonadati</taxon>
        <taxon>Aquificota</taxon>
        <taxon>Aquificia</taxon>
        <taxon>Aquificales</taxon>
        <taxon>Aquificaceae</taxon>
        <taxon>Aquifex</taxon>
    </lineage>
</organism>